<evidence type="ECO:0000255" key="1">
    <source>
        <dbReference type="HAMAP-Rule" id="MF_01576"/>
    </source>
</evidence>
<evidence type="ECO:0000305" key="2"/>
<reference key="1">
    <citation type="submission" date="2006-12" db="EMBL/GenBank/DDBJ databases">
        <title>Complete sequence of chromosome 1 of Verminephrobacter eiseniae EF01-2.</title>
        <authorList>
            <person name="Copeland A."/>
            <person name="Lucas S."/>
            <person name="Lapidus A."/>
            <person name="Barry K."/>
            <person name="Detter J.C."/>
            <person name="Glavina del Rio T."/>
            <person name="Dalin E."/>
            <person name="Tice H."/>
            <person name="Pitluck S."/>
            <person name="Chertkov O."/>
            <person name="Brettin T."/>
            <person name="Bruce D."/>
            <person name="Han C."/>
            <person name="Tapia R."/>
            <person name="Gilna P."/>
            <person name="Schmutz J."/>
            <person name="Larimer F."/>
            <person name="Land M."/>
            <person name="Hauser L."/>
            <person name="Kyrpides N."/>
            <person name="Kim E."/>
            <person name="Stahl D."/>
            <person name="Richardson P."/>
        </authorList>
    </citation>
    <scope>NUCLEOTIDE SEQUENCE [LARGE SCALE GENOMIC DNA]</scope>
    <source>
        <strain>EF01-2</strain>
    </source>
</reference>
<accession>A1WJ68</accession>
<proteinExistence type="inferred from homology"/>
<dbReference type="EC" id="1.5.1.5" evidence="1"/>
<dbReference type="EC" id="3.5.4.9" evidence="1"/>
<dbReference type="EMBL" id="CP000542">
    <property type="protein sequence ID" value="ABM57675.1"/>
    <property type="status" value="ALT_INIT"/>
    <property type="molecule type" value="Genomic_DNA"/>
</dbReference>
<dbReference type="RefSeq" id="WP_041950702.1">
    <property type="nucleotide sequence ID" value="NC_008786.1"/>
</dbReference>
<dbReference type="SMR" id="A1WJ68"/>
<dbReference type="STRING" id="391735.Veis_1922"/>
<dbReference type="GeneID" id="76460519"/>
<dbReference type="KEGG" id="vei:Veis_1922"/>
<dbReference type="eggNOG" id="COG0190">
    <property type="taxonomic scope" value="Bacteria"/>
</dbReference>
<dbReference type="HOGENOM" id="CLU_034045_2_1_4"/>
<dbReference type="OrthoDB" id="9803580at2"/>
<dbReference type="UniPathway" id="UPA00193"/>
<dbReference type="Proteomes" id="UP000000374">
    <property type="component" value="Chromosome"/>
</dbReference>
<dbReference type="GO" id="GO:0005829">
    <property type="term" value="C:cytosol"/>
    <property type="evidence" value="ECO:0007669"/>
    <property type="project" value="TreeGrafter"/>
</dbReference>
<dbReference type="GO" id="GO:0004477">
    <property type="term" value="F:methenyltetrahydrofolate cyclohydrolase activity"/>
    <property type="evidence" value="ECO:0007669"/>
    <property type="project" value="UniProtKB-UniRule"/>
</dbReference>
<dbReference type="GO" id="GO:0004488">
    <property type="term" value="F:methylenetetrahydrofolate dehydrogenase (NADP+) activity"/>
    <property type="evidence" value="ECO:0007669"/>
    <property type="project" value="UniProtKB-UniRule"/>
</dbReference>
<dbReference type="GO" id="GO:0000105">
    <property type="term" value="P:L-histidine biosynthetic process"/>
    <property type="evidence" value="ECO:0007669"/>
    <property type="project" value="UniProtKB-KW"/>
</dbReference>
<dbReference type="GO" id="GO:0009086">
    <property type="term" value="P:methionine biosynthetic process"/>
    <property type="evidence" value="ECO:0007669"/>
    <property type="project" value="UniProtKB-KW"/>
</dbReference>
<dbReference type="GO" id="GO:0006164">
    <property type="term" value="P:purine nucleotide biosynthetic process"/>
    <property type="evidence" value="ECO:0007669"/>
    <property type="project" value="UniProtKB-KW"/>
</dbReference>
<dbReference type="GO" id="GO:0035999">
    <property type="term" value="P:tetrahydrofolate interconversion"/>
    <property type="evidence" value="ECO:0007669"/>
    <property type="project" value="UniProtKB-UniRule"/>
</dbReference>
<dbReference type="CDD" id="cd01080">
    <property type="entry name" value="NAD_bind_m-THF_DH_Cyclohyd"/>
    <property type="match status" value="1"/>
</dbReference>
<dbReference type="FunFam" id="3.40.50.720:FF:000094">
    <property type="entry name" value="Bifunctional protein FolD"/>
    <property type="match status" value="1"/>
</dbReference>
<dbReference type="FunFam" id="3.40.50.10860:FF:000005">
    <property type="entry name" value="C-1-tetrahydrofolate synthase, cytoplasmic, putative"/>
    <property type="match status" value="1"/>
</dbReference>
<dbReference type="Gene3D" id="3.40.50.10860">
    <property type="entry name" value="Leucine Dehydrogenase, chain A, domain 1"/>
    <property type="match status" value="1"/>
</dbReference>
<dbReference type="Gene3D" id="3.40.50.720">
    <property type="entry name" value="NAD(P)-binding Rossmann-like Domain"/>
    <property type="match status" value="1"/>
</dbReference>
<dbReference type="HAMAP" id="MF_01576">
    <property type="entry name" value="THF_DHG_CYH"/>
    <property type="match status" value="1"/>
</dbReference>
<dbReference type="InterPro" id="IPR046346">
    <property type="entry name" value="Aminoacid_DH-like_N_sf"/>
</dbReference>
<dbReference type="InterPro" id="IPR036291">
    <property type="entry name" value="NAD(P)-bd_dom_sf"/>
</dbReference>
<dbReference type="InterPro" id="IPR000672">
    <property type="entry name" value="THF_DH/CycHdrlase"/>
</dbReference>
<dbReference type="InterPro" id="IPR020630">
    <property type="entry name" value="THF_DH/CycHdrlase_cat_dom"/>
</dbReference>
<dbReference type="InterPro" id="IPR020867">
    <property type="entry name" value="THF_DH/CycHdrlase_CS"/>
</dbReference>
<dbReference type="InterPro" id="IPR020631">
    <property type="entry name" value="THF_DH/CycHdrlase_NAD-bd_dom"/>
</dbReference>
<dbReference type="NCBIfam" id="NF010783">
    <property type="entry name" value="PRK14186.1"/>
    <property type="match status" value="1"/>
</dbReference>
<dbReference type="NCBIfam" id="NF010786">
    <property type="entry name" value="PRK14189.1"/>
    <property type="match status" value="1"/>
</dbReference>
<dbReference type="PANTHER" id="PTHR48099:SF5">
    <property type="entry name" value="C-1-TETRAHYDROFOLATE SYNTHASE, CYTOPLASMIC"/>
    <property type="match status" value="1"/>
</dbReference>
<dbReference type="PANTHER" id="PTHR48099">
    <property type="entry name" value="C-1-TETRAHYDROFOLATE SYNTHASE, CYTOPLASMIC-RELATED"/>
    <property type="match status" value="1"/>
</dbReference>
<dbReference type="Pfam" id="PF00763">
    <property type="entry name" value="THF_DHG_CYH"/>
    <property type="match status" value="1"/>
</dbReference>
<dbReference type="Pfam" id="PF02882">
    <property type="entry name" value="THF_DHG_CYH_C"/>
    <property type="match status" value="1"/>
</dbReference>
<dbReference type="PRINTS" id="PR00085">
    <property type="entry name" value="THFDHDRGNASE"/>
</dbReference>
<dbReference type="SUPFAM" id="SSF53223">
    <property type="entry name" value="Aminoacid dehydrogenase-like, N-terminal domain"/>
    <property type="match status" value="1"/>
</dbReference>
<dbReference type="SUPFAM" id="SSF51735">
    <property type="entry name" value="NAD(P)-binding Rossmann-fold domains"/>
    <property type="match status" value="1"/>
</dbReference>
<dbReference type="PROSITE" id="PS00767">
    <property type="entry name" value="THF_DHG_CYH_2"/>
    <property type="match status" value="1"/>
</dbReference>
<name>FOLD_VEREI</name>
<feature type="chain" id="PRO_0000305892" description="Bifunctional protein FolD">
    <location>
        <begin position="1"/>
        <end position="285"/>
    </location>
</feature>
<feature type="binding site" evidence="1">
    <location>
        <begin position="165"/>
        <end position="167"/>
    </location>
    <ligand>
        <name>NADP(+)</name>
        <dbReference type="ChEBI" id="CHEBI:58349"/>
    </ligand>
</feature>
<feature type="binding site" evidence="1">
    <location>
        <position position="190"/>
    </location>
    <ligand>
        <name>NADP(+)</name>
        <dbReference type="ChEBI" id="CHEBI:58349"/>
    </ligand>
</feature>
<feature type="binding site" evidence="1">
    <location>
        <position position="231"/>
    </location>
    <ligand>
        <name>NADP(+)</name>
        <dbReference type="ChEBI" id="CHEBI:58349"/>
    </ligand>
</feature>
<protein>
    <recommendedName>
        <fullName evidence="1">Bifunctional protein FolD</fullName>
    </recommendedName>
    <domain>
        <recommendedName>
            <fullName evidence="1">Methylenetetrahydrofolate dehydrogenase</fullName>
            <ecNumber evidence="1">1.5.1.5</ecNumber>
        </recommendedName>
    </domain>
    <domain>
        <recommendedName>
            <fullName evidence="1">Methenyltetrahydrofolate cyclohydrolase</fullName>
            <ecNumber evidence="1">3.5.4.9</ecNumber>
        </recommendedName>
    </domain>
</protein>
<comment type="function">
    <text evidence="1">Catalyzes the oxidation of 5,10-methylenetetrahydrofolate to 5,10-methenyltetrahydrofolate and then the hydrolysis of 5,10-methenyltetrahydrofolate to 10-formyltetrahydrofolate.</text>
</comment>
<comment type="catalytic activity">
    <reaction evidence="1">
        <text>(6R)-5,10-methylene-5,6,7,8-tetrahydrofolate + NADP(+) = (6R)-5,10-methenyltetrahydrofolate + NADPH</text>
        <dbReference type="Rhea" id="RHEA:22812"/>
        <dbReference type="ChEBI" id="CHEBI:15636"/>
        <dbReference type="ChEBI" id="CHEBI:57455"/>
        <dbReference type="ChEBI" id="CHEBI:57783"/>
        <dbReference type="ChEBI" id="CHEBI:58349"/>
        <dbReference type="EC" id="1.5.1.5"/>
    </reaction>
</comment>
<comment type="catalytic activity">
    <reaction evidence="1">
        <text>(6R)-5,10-methenyltetrahydrofolate + H2O = (6R)-10-formyltetrahydrofolate + H(+)</text>
        <dbReference type="Rhea" id="RHEA:23700"/>
        <dbReference type="ChEBI" id="CHEBI:15377"/>
        <dbReference type="ChEBI" id="CHEBI:15378"/>
        <dbReference type="ChEBI" id="CHEBI:57455"/>
        <dbReference type="ChEBI" id="CHEBI:195366"/>
        <dbReference type="EC" id="3.5.4.9"/>
    </reaction>
</comment>
<comment type="pathway">
    <text evidence="1">One-carbon metabolism; tetrahydrofolate interconversion.</text>
</comment>
<comment type="subunit">
    <text evidence="1">Homodimer.</text>
</comment>
<comment type="similarity">
    <text evidence="1">Belongs to the tetrahydrofolate dehydrogenase/cyclohydrolase family.</text>
</comment>
<comment type="sequence caution" evidence="2">
    <conflict type="erroneous initiation">
        <sequence resource="EMBL-CDS" id="ABM57675"/>
    </conflict>
</comment>
<keyword id="KW-0028">Amino-acid biosynthesis</keyword>
<keyword id="KW-0368">Histidine biosynthesis</keyword>
<keyword id="KW-0378">Hydrolase</keyword>
<keyword id="KW-0486">Methionine biosynthesis</keyword>
<keyword id="KW-0511">Multifunctional enzyme</keyword>
<keyword id="KW-0521">NADP</keyword>
<keyword id="KW-0554">One-carbon metabolism</keyword>
<keyword id="KW-0560">Oxidoreductase</keyword>
<keyword id="KW-0658">Purine biosynthesis</keyword>
<keyword id="KW-1185">Reference proteome</keyword>
<organism>
    <name type="scientific">Verminephrobacter eiseniae (strain EF01-2)</name>
    <dbReference type="NCBI Taxonomy" id="391735"/>
    <lineage>
        <taxon>Bacteria</taxon>
        <taxon>Pseudomonadati</taxon>
        <taxon>Pseudomonadota</taxon>
        <taxon>Betaproteobacteria</taxon>
        <taxon>Burkholderiales</taxon>
        <taxon>Comamonadaceae</taxon>
        <taxon>Verminephrobacter</taxon>
    </lineage>
</organism>
<sequence length="285" mass="29899">MTAHTIDGLALSRQLRSALAQRAAALTARGHQPGLAVILVGEDPASAIYVRNKIRACQDNGLRSVLEKYTANLSQAALLERIAALNADPGVHGILVQMPLPKHIDPHRVTEAIASTKDVDGYSVLSAGALLAGLDGFRPCTPYGCMKLIESTGQAIAGRHAVIVGRSQTVGKPMALLLLQANATVTLCHSATPDLGYHTRQADIVVAAVGRARMLTAEMVKPGAIVIDVGINRQADGKLCGDVDFDRVKQVAGWITPVPGGVGPMTITMLLVNTMQATERSAANP</sequence>
<gene>
    <name evidence="1" type="primary">folD</name>
    <name type="ordered locus">Veis_1922</name>
</gene>